<dbReference type="EC" id="2.8.4.3" evidence="1"/>
<dbReference type="EMBL" id="AE016827">
    <property type="protein sequence ID" value="AAU38297.1"/>
    <property type="molecule type" value="Genomic_DNA"/>
</dbReference>
<dbReference type="RefSeq" id="WP_011200858.1">
    <property type="nucleotide sequence ID" value="NC_006300.1"/>
</dbReference>
<dbReference type="SMR" id="Q65RW3"/>
<dbReference type="STRING" id="221988.MS1690"/>
<dbReference type="KEGG" id="msu:MS1690"/>
<dbReference type="eggNOG" id="COG0621">
    <property type="taxonomic scope" value="Bacteria"/>
</dbReference>
<dbReference type="HOGENOM" id="CLU_018697_2_0_6"/>
<dbReference type="OrthoDB" id="9805215at2"/>
<dbReference type="Proteomes" id="UP000000607">
    <property type="component" value="Chromosome"/>
</dbReference>
<dbReference type="GO" id="GO:0005829">
    <property type="term" value="C:cytosol"/>
    <property type="evidence" value="ECO:0007669"/>
    <property type="project" value="TreeGrafter"/>
</dbReference>
<dbReference type="GO" id="GO:0051539">
    <property type="term" value="F:4 iron, 4 sulfur cluster binding"/>
    <property type="evidence" value="ECO:0007669"/>
    <property type="project" value="UniProtKB-UniRule"/>
</dbReference>
<dbReference type="GO" id="GO:0046872">
    <property type="term" value="F:metal ion binding"/>
    <property type="evidence" value="ECO:0007669"/>
    <property type="project" value="UniProtKB-KW"/>
</dbReference>
<dbReference type="GO" id="GO:0035597">
    <property type="term" value="F:N6-isopentenyladenosine methylthiotransferase activity"/>
    <property type="evidence" value="ECO:0007669"/>
    <property type="project" value="TreeGrafter"/>
</dbReference>
<dbReference type="CDD" id="cd01335">
    <property type="entry name" value="Radical_SAM"/>
    <property type="match status" value="1"/>
</dbReference>
<dbReference type="FunFam" id="3.40.50.12160:FF:000001">
    <property type="entry name" value="tRNA-2-methylthio-N(6)-dimethylallyladenosine synthase"/>
    <property type="match status" value="1"/>
</dbReference>
<dbReference type="FunFam" id="3.80.30.20:FF:000001">
    <property type="entry name" value="tRNA-2-methylthio-N(6)-dimethylallyladenosine synthase 2"/>
    <property type="match status" value="1"/>
</dbReference>
<dbReference type="Gene3D" id="3.40.50.12160">
    <property type="entry name" value="Methylthiotransferase, N-terminal domain"/>
    <property type="match status" value="1"/>
</dbReference>
<dbReference type="Gene3D" id="3.80.30.20">
    <property type="entry name" value="tm_1862 like domain"/>
    <property type="match status" value="1"/>
</dbReference>
<dbReference type="HAMAP" id="MF_01864">
    <property type="entry name" value="tRNA_metthiotr_MiaB"/>
    <property type="match status" value="1"/>
</dbReference>
<dbReference type="InterPro" id="IPR006638">
    <property type="entry name" value="Elp3/MiaA/NifB-like_rSAM"/>
</dbReference>
<dbReference type="InterPro" id="IPR005839">
    <property type="entry name" value="Methylthiotransferase"/>
</dbReference>
<dbReference type="InterPro" id="IPR020612">
    <property type="entry name" value="Methylthiotransferase_CS"/>
</dbReference>
<dbReference type="InterPro" id="IPR013848">
    <property type="entry name" value="Methylthiotransferase_N"/>
</dbReference>
<dbReference type="InterPro" id="IPR038135">
    <property type="entry name" value="Methylthiotransferase_N_sf"/>
</dbReference>
<dbReference type="InterPro" id="IPR006463">
    <property type="entry name" value="MiaB_methiolase"/>
</dbReference>
<dbReference type="InterPro" id="IPR007197">
    <property type="entry name" value="rSAM"/>
</dbReference>
<dbReference type="InterPro" id="IPR023404">
    <property type="entry name" value="rSAM_horseshoe"/>
</dbReference>
<dbReference type="InterPro" id="IPR002792">
    <property type="entry name" value="TRAM_dom"/>
</dbReference>
<dbReference type="NCBIfam" id="TIGR01574">
    <property type="entry name" value="miaB-methiolase"/>
    <property type="match status" value="1"/>
</dbReference>
<dbReference type="NCBIfam" id="TIGR00089">
    <property type="entry name" value="MiaB/RimO family radical SAM methylthiotransferase"/>
    <property type="match status" value="1"/>
</dbReference>
<dbReference type="PANTHER" id="PTHR43020">
    <property type="entry name" value="CDK5 REGULATORY SUBUNIT-ASSOCIATED PROTEIN 1"/>
    <property type="match status" value="1"/>
</dbReference>
<dbReference type="PANTHER" id="PTHR43020:SF2">
    <property type="entry name" value="MITOCHONDRIAL TRNA METHYLTHIOTRANSFERASE CDK5RAP1"/>
    <property type="match status" value="1"/>
</dbReference>
<dbReference type="Pfam" id="PF04055">
    <property type="entry name" value="Radical_SAM"/>
    <property type="match status" value="1"/>
</dbReference>
<dbReference type="Pfam" id="PF01938">
    <property type="entry name" value="TRAM"/>
    <property type="match status" value="1"/>
</dbReference>
<dbReference type="Pfam" id="PF00919">
    <property type="entry name" value="UPF0004"/>
    <property type="match status" value="1"/>
</dbReference>
<dbReference type="SFLD" id="SFLDF00273">
    <property type="entry name" value="(dimethylallyl)adenosine_tRNA"/>
    <property type="match status" value="1"/>
</dbReference>
<dbReference type="SFLD" id="SFLDG01082">
    <property type="entry name" value="B12-binding_domain_containing"/>
    <property type="match status" value="1"/>
</dbReference>
<dbReference type="SFLD" id="SFLDG01061">
    <property type="entry name" value="methylthiotransferase"/>
    <property type="match status" value="1"/>
</dbReference>
<dbReference type="SMART" id="SM00729">
    <property type="entry name" value="Elp3"/>
    <property type="match status" value="1"/>
</dbReference>
<dbReference type="SUPFAM" id="SSF102114">
    <property type="entry name" value="Radical SAM enzymes"/>
    <property type="match status" value="1"/>
</dbReference>
<dbReference type="PROSITE" id="PS51449">
    <property type="entry name" value="MTTASE_N"/>
    <property type="match status" value="1"/>
</dbReference>
<dbReference type="PROSITE" id="PS01278">
    <property type="entry name" value="MTTASE_RADICAL"/>
    <property type="match status" value="1"/>
</dbReference>
<dbReference type="PROSITE" id="PS51918">
    <property type="entry name" value="RADICAL_SAM"/>
    <property type="match status" value="1"/>
</dbReference>
<dbReference type="PROSITE" id="PS50926">
    <property type="entry name" value="TRAM"/>
    <property type="match status" value="1"/>
</dbReference>
<name>MIAB_MANSM</name>
<evidence type="ECO:0000255" key="1">
    <source>
        <dbReference type="HAMAP-Rule" id="MF_01864"/>
    </source>
</evidence>
<evidence type="ECO:0000255" key="2">
    <source>
        <dbReference type="PROSITE-ProRule" id="PRU01266"/>
    </source>
</evidence>
<feature type="chain" id="PRO_0000374368" description="tRNA-2-methylthio-N(6)-dimethylallyladenosine synthase">
    <location>
        <begin position="1"/>
        <end position="474"/>
    </location>
</feature>
<feature type="domain" description="MTTase N-terminal" evidence="1">
    <location>
        <begin position="3"/>
        <end position="120"/>
    </location>
</feature>
<feature type="domain" description="Radical SAM core" evidence="2">
    <location>
        <begin position="143"/>
        <end position="375"/>
    </location>
</feature>
<feature type="domain" description="TRAM" evidence="1">
    <location>
        <begin position="378"/>
        <end position="441"/>
    </location>
</feature>
<feature type="binding site" evidence="1">
    <location>
        <position position="12"/>
    </location>
    <ligand>
        <name>[4Fe-4S] cluster</name>
        <dbReference type="ChEBI" id="CHEBI:49883"/>
        <label>1</label>
    </ligand>
</feature>
<feature type="binding site" evidence="1">
    <location>
        <position position="49"/>
    </location>
    <ligand>
        <name>[4Fe-4S] cluster</name>
        <dbReference type="ChEBI" id="CHEBI:49883"/>
        <label>1</label>
    </ligand>
</feature>
<feature type="binding site" evidence="1">
    <location>
        <position position="83"/>
    </location>
    <ligand>
        <name>[4Fe-4S] cluster</name>
        <dbReference type="ChEBI" id="CHEBI:49883"/>
        <label>1</label>
    </ligand>
</feature>
<feature type="binding site" evidence="1">
    <location>
        <position position="157"/>
    </location>
    <ligand>
        <name>[4Fe-4S] cluster</name>
        <dbReference type="ChEBI" id="CHEBI:49883"/>
        <label>2</label>
        <note>4Fe-4S-S-AdoMet</note>
    </ligand>
</feature>
<feature type="binding site" evidence="1">
    <location>
        <position position="161"/>
    </location>
    <ligand>
        <name>[4Fe-4S] cluster</name>
        <dbReference type="ChEBI" id="CHEBI:49883"/>
        <label>2</label>
        <note>4Fe-4S-S-AdoMet</note>
    </ligand>
</feature>
<feature type="binding site" evidence="1">
    <location>
        <position position="164"/>
    </location>
    <ligand>
        <name>[4Fe-4S] cluster</name>
        <dbReference type="ChEBI" id="CHEBI:49883"/>
        <label>2</label>
        <note>4Fe-4S-S-AdoMet</note>
    </ligand>
</feature>
<proteinExistence type="inferred from homology"/>
<sequence length="474" mass="53474">MTQKLHIKTWGCQMNEYDSSKMADLLQSTHGLELTEEAEQADVLLLNTCSIREKAQEKVFHQLGRWKELKKKNPNLVIGVGGCVASQEGEHIRERAPYVDIIFGPQTLHRLPEMINQIRAGEKAVLDISFPEIEKFDRLPEPKAEGPTAFVSIMEGCNKYCTYCVVPYTRGEEVSRPLDDVLFEIAQLAEQGVREVNLLGQNVNAYRGPTHDGGICSFAELLRLVAAIDGIDRLRFTTSNPIEFTDDIIDVYRDTPELVSFLHLPVQAGSDRILTMMKRGHTAIEYKSIIRKLRAVRPNIQISSDFIVGFPGETNEEFEQTMNLIQQVNFDMSFSFVYSARPGTPAADMPDDVTEEEKKQRLYILQQRINNQAAQFSRAMLGTEQRVLVEGPSKKDIMELTGRTENNRIVNFAGTPDMIGKFVDIKITDVFTNSLRGDVVRTEDQMGLRVVQSPQAVINRTRKEDELGVGRFGG</sequence>
<gene>
    <name evidence="1" type="primary">miaB</name>
    <name type="ordered locus">MS1690</name>
</gene>
<reference key="1">
    <citation type="journal article" date="2004" name="Nat. Biotechnol.">
        <title>The genome sequence of the capnophilic rumen bacterium Mannheimia succiniciproducens.</title>
        <authorList>
            <person name="Hong S.H."/>
            <person name="Kim J.S."/>
            <person name="Lee S.Y."/>
            <person name="In Y.H."/>
            <person name="Choi S.S."/>
            <person name="Rih J.-K."/>
            <person name="Kim C.H."/>
            <person name="Jeong H."/>
            <person name="Hur C.G."/>
            <person name="Kim J.J."/>
        </authorList>
    </citation>
    <scope>NUCLEOTIDE SEQUENCE [LARGE SCALE GENOMIC DNA]</scope>
    <source>
        <strain>KCTC 0769BP / MBEL55E</strain>
    </source>
</reference>
<comment type="function">
    <text evidence="1">Catalyzes the methylthiolation of N6-(dimethylallyl)adenosine (i(6)A), leading to the formation of 2-methylthio-N6-(dimethylallyl)adenosine (ms(2)i(6)A) at position 37 in tRNAs that read codons beginning with uridine.</text>
</comment>
<comment type="catalytic activity">
    <reaction evidence="1">
        <text>N(6)-dimethylallyladenosine(37) in tRNA + (sulfur carrier)-SH + AH2 + 2 S-adenosyl-L-methionine = 2-methylsulfanyl-N(6)-dimethylallyladenosine(37) in tRNA + (sulfur carrier)-H + 5'-deoxyadenosine + L-methionine + A + S-adenosyl-L-homocysteine + 2 H(+)</text>
        <dbReference type="Rhea" id="RHEA:37067"/>
        <dbReference type="Rhea" id="RHEA-COMP:10375"/>
        <dbReference type="Rhea" id="RHEA-COMP:10376"/>
        <dbReference type="Rhea" id="RHEA-COMP:14737"/>
        <dbReference type="Rhea" id="RHEA-COMP:14739"/>
        <dbReference type="ChEBI" id="CHEBI:13193"/>
        <dbReference type="ChEBI" id="CHEBI:15378"/>
        <dbReference type="ChEBI" id="CHEBI:17319"/>
        <dbReference type="ChEBI" id="CHEBI:17499"/>
        <dbReference type="ChEBI" id="CHEBI:29917"/>
        <dbReference type="ChEBI" id="CHEBI:57844"/>
        <dbReference type="ChEBI" id="CHEBI:57856"/>
        <dbReference type="ChEBI" id="CHEBI:59789"/>
        <dbReference type="ChEBI" id="CHEBI:64428"/>
        <dbReference type="ChEBI" id="CHEBI:74415"/>
        <dbReference type="ChEBI" id="CHEBI:74417"/>
        <dbReference type="EC" id="2.8.4.3"/>
    </reaction>
</comment>
<comment type="cofactor">
    <cofactor evidence="1">
        <name>[4Fe-4S] cluster</name>
        <dbReference type="ChEBI" id="CHEBI:49883"/>
    </cofactor>
    <text evidence="1">Binds 2 [4Fe-4S] clusters. One cluster is coordinated with 3 cysteines and an exchangeable S-adenosyl-L-methionine.</text>
</comment>
<comment type="subunit">
    <text evidence="1">Monomer.</text>
</comment>
<comment type="subcellular location">
    <subcellularLocation>
        <location evidence="1">Cytoplasm</location>
    </subcellularLocation>
</comment>
<comment type="similarity">
    <text evidence="1">Belongs to the methylthiotransferase family. MiaB subfamily.</text>
</comment>
<accession>Q65RW3</accession>
<organism>
    <name type="scientific">Mannheimia succiniciproducens (strain KCTC 0769BP / MBEL55E)</name>
    <dbReference type="NCBI Taxonomy" id="221988"/>
    <lineage>
        <taxon>Bacteria</taxon>
        <taxon>Pseudomonadati</taxon>
        <taxon>Pseudomonadota</taxon>
        <taxon>Gammaproteobacteria</taxon>
        <taxon>Pasteurellales</taxon>
        <taxon>Pasteurellaceae</taxon>
        <taxon>Basfia</taxon>
    </lineage>
</organism>
<protein>
    <recommendedName>
        <fullName evidence="1">tRNA-2-methylthio-N(6)-dimethylallyladenosine synthase</fullName>
        <ecNumber evidence="1">2.8.4.3</ecNumber>
    </recommendedName>
    <alternativeName>
        <fullName evidence="1">(Dimethylallyl)adenosine tRNA methylthiotransferase MiaB</fullName>
    </alternativeName>
    <alternativeName>
        <fullName evidence="1">tRNA-i(6)A37 methylthiotransferase</fullName>
    </alternativeName>
</protein>
<keyword id="KW-0004">4Fe-4S</keyword>
<keyword id="KW-0963">Cytoplasm</keyword>
<keyword id="KW-0408">Iron</keyword>
<keyword id="KW-0411">Iron-sulfur</keyword>
<keyword id="KW-0479">Metal-binding</keyword>
<keyword id="KW-0949">S-adenosyl-L-methionine</keyword>
<keyword id="KW-0808">Transferase</keyword>
<keyword id="KW-0819">tRNA processing</keyword>